<reference key="1">
    <citation type="journal article" date="2002" name="Nature">
        <title>Genome sequence and comparative analysis of the model rodent malaria parasite Plasmodium yoelii yoelii.</title>
        <authorList>
            <person name="Carlton J.M."/>
            <person name="Angiuoli S.V."/>
            <person name="Suh B.B."/>
            <person name="Kooij T.W."/>
            <person name="Pertea M."/>
            <person name="Silva J.C."/>
            <person name="Ermolaeva M.D."/>
            <person name="Allen J.E."/>
            <person name="Selengut J.D."/>
            <person name="Koo H.L."/>
            <person name="Peterson J.D."/>
            <person name="Pop M."/>
            <person name="Kosack D.S."/>
            <person name="Shumway M.F."/>
            <person name="Bidwell S.L."/>
            <person name="Shallom S.J."/>
            <person name="van Aken S.E."/>
            <person name="Riedmuller S.B."/>
            <person name="Feldblyum T.V."/>
            <person name="Cho J.K."/>
            <person name="Quackenbush J."/>
            <person name="Sedegah M."/>
            <person name="Shoaibi A."/>
            <person name="Cummings L.M."/>
            <person name="Florens L."/>
            <person name="Yates J.R. III"/>
            <person name="Raine J.D."/>
            <person name="Sinden R.E."/>
            <person name="Harris M.A."/>
            <person name="Cunningham D.A."/>
            <person name="Preiser P.R."/>
            <person name="Bergman L.W."/>
            <person name="Vaidya A.B."/>
            <person name="van Lin L.H."/>
            <person name="Janse C.J."/>
            <person name="Waters A.P."/>
            <person name="Smith H.O."/>
            <person name="White O.R."/>
            <person name="Salzberg S.L."/>
            <person name="Venter J.C."/>
            <person name="Fraser C.M."/>
            <person name="Hoffman S.L."/>
            <person name="Gardner M.J."/>
            <person name="Carucci D.J."/>
        </authorList>
    </citation>
    <scope>NUCLEOTIDE SEQUENCE [LARGE SCALE GENOMIC DNA]</scope>
    <source>
        <strain>17XNL</strain>
    </source>
</reference>
<comment type="function">
    <text evidence="1">Myosins are actin-based motor molecules with ATPase activity. Unconventional myosins serve in intracellular movements. Their highly divergent tails are presumed to bind to membranous compartments, which would be moved relative to actin filaments (By similarity).</text>
</comment>
<comment type="subunit">
    <text evidence="2">Interacts with ACT1.</text>
</comment>
<comment type="subcellular location">
    <subcellularLocation>
        <location evidence="1">Cell membrane</location>
        <topology evidence="1">Peripheral membrane protein</topology>
        <orientation evidence="1">Cytoplasmic side</orientation>
    </subcellularLocation>
    <text evidence="1">Tightly associated with the plasma membrane.</text>
</comment>
<comment type="domain">
    <text>This protein differs from the typical myosin heavy chain structure in having head and tail domains but no discernible neck domain.</text>
</comment>
<comment type="similarity">
    <text evidence="5">Belongs to the TRAFAC class myosin-kinesin ATPase superfamily. Myosin family.</text>
</comment>
<protein>
    <recommendedName>
        <fullName>Myosin-A</fullName>
    </recommendedName>
</protein>
<proteinExistence type="evidence at protein level"/>
<gene>
    <name evidence="5" type="primary">MyoA</name>
    <name type="ORF">PY01232</name>
</gene>
<sequence length="817" mass="92192">MAVTNEELKTAHKIVRRVSNIEAFDKSGVVFKGYQIWTNISPTIEEDPNVMFVKCVVQHGSNQDKLNVVQIDPPGSGTPYEIDVKSAWNCNSQVDPMSFGDIGLLNHTNTPCVLDFLKHRYLKNQIYTTACPLIVAINPYKDLGNTTDEWIRKYRDASDHTRLPPHIFSCAREALSNLHGVNKSQTIIVSGESGAGKTEATKQIMKYFASSKNGNMDLYIQTAIMAANPVLEAFGNAKTIRNNNSSRFGRFMQLAISHEGGIRNGSVVAFLLEKSRIITQDDNERSYHIFYQFLKGADSNMKSKFGLKGIKDYKLLNPNSPDVDGIDDVKDFQEVITSLKNMQLNDEQIEVIFSIIAGILTLGNVRIVEKTEAGLSDAAGIHNDDMETFKKACELMFLDPELVKRELLIKVTIAGGNRIEGRWNKNDAEVLKLSLCKAMYEKLFLWIIKNLNSRIEPEGGFKAFMGMLDIFGFEVFKNNSLEQLFINITNEMLQKNFVDIVFERESKLYRDEGISTAELNYTSNKEVISVLCERGKSVLSYLEDQCLAPGGSDEKFVNACVVNLKSNEKFIPAKVASNKNFIIQHTIGPIQYCSDNFLLKNKDVLRGELVEIILGSGNKVVSGLFEGQVIEKGKMAKGSLIGSQFLNQLTSLMTLINSTEPHFIRCIKPNENKKPLEWCEPKILIQLHALSILEALVLRQLGYSYRRTFDEFLYQFKFVDINTSENSSLDSREKCNKILKLSGLSDDMLKIGKTMVFLKQDGAKMLSKIQREKLVEWENCVSVIEAAIMKYKHKQNVENNVSSLMRVQAHIRKRMVA</sequence>
<accession>Q7RQ71</accession>
<feature type="chain" id="PRO_0000123376" description="Myosin-A">
    <location>
        <begin position="1"/>
        <end position="817"/>
    </location>
</feature>
<feature type="domain" description="Myosin motor" evidence="4">
    <location>
        <begin position="97"/>
        <end position="771"/>
    </location>
</feature>
<feature type="region of interest" description="Actin-binding" evidence="3">
    <location>
        <begin position="661"/>
        <end position="671"/>
    </location>
</feature>
<feature type="region of interest" description="Tail">
    <location>
        <begin position="773"/>
        <end position="817"/>
    </location>
</feature>
<feature type="binding site" evidence="1">
    <location>
        <begin position="191"/>
        <end position="198"/>
    </location>
    <ligand>
        <name>ATP</name>
        <dbReference type="ChEBI" id="CHEBI:30616"/>
    </ligand>
</feature>
<feature type="modified residue" description="Phosphoserine" evidence="2">
    <location>
        <position position="19"/>
    </location>
</feature>
<feature type="helix" evidence="6">
    <location>
        <begin position="804"/>
        <end position="816"/>
    </location>
</feature>
<evidence type="ECO:0000250" key="1"/>
<evidence type="ECO:0000250" key="2">
    <source>
        <dbReference type="UniProtKB" id="Q8IDR3"/>
    </source>
</evidence>
<evidence type="ECO:0000255" key="3"/>
<evidence type="ECO:0000255" key="4">
    <source>
        <dbReference type="PROSITE-ProRule" id="PRU00782"/>
    </source>
</evidence>
<evidence type="ECO:0000305" key="5"/>
<evidence type="ECO:0007829" key="6">
    <source>
        <dbReference type="PDB" id="2QAC"/>
    </source>
</evidence>
<dbReference type="EMBL" id="AABL01000322">
    <property type="protein sequence ID" value="EAA20523.1"/>
    <property type="molecule type" value="Genomic_DNA"/>
</dbReference>
<dbReference type="PDB" id="2AUC">
    <property type="method" value="X-ray"/>
    <property type="resolution" value="2.60 A"/>
    <property type="chains" value="D=803-817"/>
</dbReference>
<dbReference type="PDB" id="2QAC">
    <property type="method" value="X-ray"/>
    <property type="resolution" value="1.70 A"/>
    <property type="chains" value="T=803-817"/>
</dbReference>
<dbReference type="PDB" id="4GGN">
    <property type="method" value="X-ray"/>
    <property type="resolution" value="2.29 A"/>
    <property type="chains" value="D/E/F=803-817"/>
</dbReference>
<dbReference type="PDBsum" id="2AUC"/>
<dbReference type="PDBsum" id="2QAC"/>
<dbReference type="PDBsum" id="4GGN"/>
<dbReference type="SMR" id="Q7RQ71"/>
<dbReference type="DIP" id="DIP-61139N"/>
<dbReference type="FunCoup" id="Q7RQ71">
    <property type="interactions" value="4"/>
</dbReference>
<dbReference type="IntAct" id="Q7RQ71">
    <property type="interactions" value="2"/>
</dbReference>
<dbReference type="STRING" id="73239.Q7RQ71"/>
<dbReference type="PaxDb" id="73239-Q7RQ71"/>
<dbReference type="EnsemblProtists" id="EAA20523">
    <property type="protein sequence ID" value="EAA20523"/>
    <property type="gene ID" value="EAA20523"/>
</dbReference>
<dbReference type="KEGG" id="pyo:PY17X_1361400"/>
<dbReference type="InParanoid" id="Q7RQ71"/>
<dbReference type="EvolutionaryTrace" id="Q7RQ71"/>
<dbReference type="Proteomes" id="UP000008553">
    <property type="component" value="Unassembled WGS sequence"/>
</dbReference>
<dbReference type="GO" id="GO:0005737">
    <property type="term" value="C:cytoplasm"/>
    <property type="evidence" value="ECO:0007669"/>
    <property type="project" value="TreeGrafter"/>
</dbReference>
<dbReference type="GO" id="GO:0016459">
    <property type="term" value="C:myosin complex"/>
    <property type="evidence" value="ECO:0007669"/>
    <property type="project" value="UniProtKB-KW"/>
</dbReference>
<dbReference type="GO" id="GO:0005886">
    <property type="term" value="C:plasma membrane"/>
    <property type="evidence" value="ECO:0007669"/>
    <property type="project" value="UniProtKB-SubCell"/>
</dbReference>
<dbReference type="GO" id="GO:0051015">
    <property type="term" value="F:actin filament binding"/>
    <property type="evidence" value="ECO:0007669"/>
    <property type="project" value="TreeGrafter"/>
</dbReference>
<dbReference type="GO" id="GO:0005524">
    <property type="term" value="F:ATP binding"/>
    <property type="evidence" value="ECO:0007669"/>
    <property type="project" value="UniProtKB-KW"/>
</dbReference>
<dbReference type="GO" id="GO:0000146">
    <property type="term" value="F:microfilament motor activity"/>
    <property type="evidence" value="ECO:0007669"/>
    <property type="project" value="TreeGrafter"/>
</dbReference>
<dbReference type="GO" id="GO:0007015">
    <property type="term" value="P:actin filament organization"/>
    <property type="evidence" value="ECO:0007669"/>
    <property type="project" value="TreeGrafter"/>
</dbReference>
<dbReference type="CDD" id="cd14876">
    <property type="entry name" value="MYSc_Myo14"/>
    <property type="match status" value="1"/>
</dbReference>
<dbReference type="FunFam" id="1.10.10.820:FF:000001">
    <property type="entry name" value="Myosin heavy chain"/>
    <property type="match status" value="1"/>
</dbReference>
<dbReference type="Gene3D" id="1.10.10.820">
    <property type="match status" value="1"/>
</dbReference>
<dbReference type="Gene3D" id="1.20.5.4820">
    <property type="match status" value="1"/>
</dbReference>
<dbReference type="Gene3D" id="1.20.58.530">
    <property type="match status" value="1"/>
</dbReference>
<dbReference type="Gene3D" id="3.40.850.10">
    <property type="entry name" value="Kinesin motor domain"/>
    <property type="match status" value="1"/>
</dbReference>
<dbReference type="Gene3D" id="1.20.120.720">
    <property type="entry name" value="Myosin VI head, motor domain, U50 subdomain"/>
    <property type="match status" value="1"/>
</dbReference>
<dbReference type="InterPro" id="IPR036961">
    <property type="entry name" value="Kinesin_motor_dom_sf"/>
</dbReference>
<dbReference type="InterPro" id="IPR001609">
    <property type="entry name" value="Myosin_head_motor_dom-like"/>
</dbReference>
<dbReference type="InterPro" id="IPR036044">
    <property type="entry name" value="MYSc_Myo14"/>
</dbReference>
<dbReference type="InterPro" id="IPR027417">
    <property type="entry name" value="P-loop_NTPase"/>
</dbReference>
<dbReference type="PANTHER" id="PTHR13140">
    <property type="entry name" value="MYOSIN"/>
    <property type="match status" value="1"/>
</dbReference>
<dbReference type="PANTHER" id="PTHR13140:SF270">
    <property type="entry name" value="MYOSIN-12"/>
    <property type="match status" value="1"/>
</dbReference>
<dbReference type="Pfam" id="PF00063">
    <property type="entry name" value="Myosin_head"/>
    <property type="match status" value="1"/>
</dbReference>
<dbReference type="PRINTS" id="PR00193">
    <property type="entry name" value="MYOSINHEAVY"/>
</dbReference>
<dbReference type="SMART" id="SM00242">
    <property type="entry name" value="MYSc"/>
    <property type="match status" value="1"/>
</dbReference>
<dbReference type="SUPFAM" id="SSF52540">
    <property type="entry name" value="P-loop containing nucleoside triphosphate hydrolases"/>
    <property type="match status" value="1"/>
</dbReference>
<dbReference type="PROSITE" id="PS51456">
    <property type="entry name" value="MYOSIN_MOTOR"/>
    <property type="match status" value="1"/>
</dbReference>
<name>MYOA_PLAYO</name>
<keyword id="KW-0002">3D-structure</keyword>
<keyword id="KW-0009">Actin-binding</keyword>
<keyword id="KW-0067">ATP-binding</keyword>
<keyword id="KW-1003">Cell membrane</keyword>
<keyword id="KW-0472">Membrane</keyword>
<keyword id="KW-0505">Motor protein</keyword>
<keyword id="KW-0518">Myosin</keyword>
<keyword id="KW-0547">Nucleotide-binding</keyword>
<keyword id="KW-0597">Phosphoprotein</keyword>
<keyword id="KW-1185">Reference proteome</keyword>
<organism>
    <name type="scientific">Plasmodium yoelii yoelii</name>
    <dbReference type="NCBI Taxonomy" id="73239"/>
    <lineage>
        <taxon>Eukaryota</taxon>
        <taxon>Sar</taxon>
        <taxon>Alveolata</taxon>
        <taxon>Apicomplexa</taxon>
        <taxon>Aconoidasida</taxon>
        <taxon>Haemosporida</taxon>
        <taxon>Plasmodiidae</taxon>
        <taxon>Plasmodium</taxon>
        <taxon>Plasmodium (Vinckeia)</taxon>
    </lineage>
</organism>